<sequence length="148" mass="16371">MYFAIRLSFVLAVLFCLTGNGSARMLDADRNRLQQLQIRSQQSTDANTQVDIAYEVIGIYDKYKGQGGSNVLREAQLNSQVNDFKRKTMVIDGVPAQGGVWGILGAIKKAADAVPDNVKKDAENLVKSSTKVLVRGIYDYLMGKMKQH</sequence>
<comment type="function">
    <text evidence="1">A humoral factor that may play a role in stress tolerance.</text>
</comment>
<comment type="subcellular location">
    <subcellularLocation>
        <location evidence="1">Secreted</location>
    </subcellularLocation>
</comment>
<comment type="similarity">
    <text evidence="2">Belongs to the Turandot family.</text>
</comment>
<name>TOTZ_DROSE</name>
<proteinExistence type="inferred from homology"/>
<reference evidence="3" key="1">
    <citation type="journal article" date="2007" name="Nature">
        <title>Evolution of genes and genomes on the Drosophila phylogeny.</title>
        <authorList>
            <consortium name="Drosophila 12 genomes consortium"/>
        </authorList>
    </citation>
    <scope>NUCLEOTIDE SEQUENCE [LARGE SCALE GENOMIC DNA]</scope>
    <source>
        <strain evidence="3">Rob3c / Tucson 14021-0248.25</strain>
    </source>
</reference>
<protein>
    <recommendedName>
        <fullName>Protein Turandot Z</fullName>
    </recommendedName>
</protein>
<gene>
    <name evidence="3" type="primary">TotZ</name>
    <name type="ORF">GM23146</name>
</gene>
<feature type="signal peptide" evidence="2">
    <location>
        <begin position="1"/>
        <end position="23"/>
    </location>
</feature>
<feature type="chain" id="PRO_0000355009" description="Protein Turandot Z">
    <location>
        <begin position="24"/>
        <end position="148"/>
    </location>
</feature>
<evidence type="ECO:0000250" key="1">
    <source>
        <dbReference type="UniProtKB" id="Q8IN41"/>
    </source>
</evidence>
<evidence type="ECO:0000255" key="2"/>
<evidence type="ECO:0000312" key="3">
    <source>
        <dbReference type="EMBL" id="EDW49599.1"/>
    </source>
</evidence>
<keyword id="KW-0391">Immunity</keyword>
<keyword id="KW-0399">Innate immunity</keyword>
<keyword id="KW-1185">Reference proteome</keyword>
<keyword id="KW-0964">Secreted</keyword>
<keyword id="KW-0732">Signal</keyword>
<organism>
    <name type="scientific">Drosophila sechellia</name>
    <name type="common">Fruit fly</name>
    <dbReference type="NCBI Taxonomy" id="7238"/>
    <lineage>
        <taxon>Eukaryota</taxon>
        <taxon>Metazoa</taxon>
        <taxon>Ecdysozoa</taxon>
        <taxon>Arthropoda</taxon>
        <taxon>Hexapoda</taxon>
        <taxon>Insecta</taxon>
        <taxon>Pterygota</taxon>
        <taxon>Neoptera</taxon>
        <taxon>Endopterygota</taxon>
        <taxon>Diptera</taxon>
        <taxon>Brachycera</taxon>
        <taxon>Muscomorpha</taxon>
        <taxon>Ephydroidea</taxon>
        <taxon>Drosophilidae</taxon>
        <taxon>Drosophila</taxon>
        <taxon>Sophophora</taxon>
    </lineage>
</organism>
<dbReference type="EMBL" id="CH480842">
    <property type="protein sequence ID" value="EDW49599.1"/>
    <property type="molecule type" value="Genomic_DNA"/>
</dbReference>
<dbReference type="RefSeq" id="XP_002043415.1">
    <property type="nucleotide sequence ID" value="XM_002043379.1"/>
</dbReference>
<dbReference type="STRING" id="7238.B4II55"/>
<dbReference type="EnsemblMetazoa" id="FBtr0206131">
    <property type="protein sequence ID" value="FBpp0204623"/>
    <property type="gene ID" value="FBgn0178014"/>
</dbReference>
<dbReference type="EnsemblMetazoa" id="XM_032722385.1">
    <property type="protein sequence ID" value="XP_032578276.1"/>
    <property type="gene ID" value="LOC6619190"/>
</dbReference>
<dbReference type="HOGENOM" id="CLU_1760725_0_0_1"/>
<dbReference type="OMA" id="GFWSCIS"/>
<dbReference type="PhylomeDB" id="B4II55"/>
<dbReference type="Proteomes" id="UP000001292">
    <property type="component" value="Unassembled WGS sequence"/>
</dbReference>
<dbReference type="GO" id="GO:0005615">
    <property type="term" value="C:extracellular space"/>
    <property type="evidence" value="ECO:0000250"/>
    <property type="project" value="UniProtKB"/>
</dbReference>
<dbReference type="GO" id="GO:0034605">
    <property type="term" value="P:cellular response to heat"/>
    <property type="evidence" value="ECO:0007669"/>
    <property type="project" value="EnsemblMetazoa"/>
</dbReference>
<dbReference type="GO" id="GO:0034599">
    <property type="term" value="P:cellular response to oxidative stress"/>
    <property type="evidence" value="ECO:0007669"/>
    <property type="project" value="EnsemblMetazoa"/>
</dbReference>
<dbReference type="GO" id="GO:0034644">
    <property type="term" value="P:cellular response to UV"/>
    <property type="evidence" value="ECO:0007669"/>
    <property type="project" value="EnsemblMetazoa"/>
</dbReference>
<dbReference type="GO" id="GO:0045087">
    <property type="term" value="P:innate immune response"/>
    <property type="evidence" value="ECO:0007669"/>
    <property type="project" value="UniProtKB-KW"/>
</dbReference>
<dbReference type="GO" id="GO:0009617">
    <property type="term" value="P:response to bacterium"/>
    <property type="evidence" value="ECO:0007669"/>
    <property type="project" value="EnsemblMetazoa"/>
</dbReference>
<dbReference type="GO" id="GO:0009408">
    <property type="term" value="P:response to heat"/>
    <property type="evidence" value="ECO:0000250"/>
    <property type="project" value="UniProtKB"/>
</dbReference>
<dbReference type="GO" id="GO:0006979">
    <property type="term" value="P:response to oxidative stress"/>
    <property type="evidence" value="ECO:0000250"/>
    <property type="project" value="UniProtKB"/>
</dbReference>
<dbReference type="GO" id="GO:0009411">
    <property type="term" value="P:response to UV"/>
    <property type="evidence" value="ECO:0000250"/>
    <property type="project" value="UniProtKB"/>
</dbReference>
<dbReference type="InterPro" id="IPR010825">
    <property type="entry name" value="Turandot"/>
</dbReference>
<dbReference type="Pfam" id="PF07240">
    <property type="entry name" value="Turandot"/>
    <property type="match status" value="1"/>
</dbReference>
<accession>B4II55</accession>